<sequence length="355" mass="38708">MDNERQKALDTVIKNMEKSFGKGAVMKLGDNKARRVSSISSGSVTLDNALGVGGYPKGRIVEIYGPESSGKTTVALHAIAEVQKQGGVAAFIDAEHALDPVYAEALGVDIDNLYLSQPDHGEQGLEIAEAFVRSGAVDIIVVDSVAALTPKAEIEGEMGDTHVGLQARLMSQALRKLSGAISKSNCTAVFINQIREKVGVMFGNPETTPGGRALKFYSSVRLEVRRAEQLKQGQEIVGNRTKIKVVKNKVAPPFRVAEVDIMYGQGISKEGELIDLGVENDIVDKSGAWYSYNGDRMGQGKENVKNYLKEHPEIKQDIDNKLRQKLGIFDGDIEEKDEKQAEAEKNENTNLFDEE</sequence>
<feature type="chain" id="PRO_1000193328" description="Protein RecA">
    <location>
        <begin position="1"/>
        <end position="355"/>
    </location>
</feature>
<feature type="region of interest" description="Disordered" evidence="2">
    <location>
        <begin position="333"/>
        <end position="355"/>
    </location>
</feature>
<feature type="compositionally biased region" description="Basic and acidic residues" evidence="2">
    <location>
        <begin position="336"/>
        <end position="347"/>
    </location>
</feature>
<feature type="binding site" evidence="1">
    <location>
        <begin position="65"/>
        <end position="72"/>
    </location>
    <ligand>
        <name>ATP</name>
        <dbReference type="ChEBI" id="CHEBI:30616"/>
    </ligand>
</feature>
<reference key="1">
    <citation type="journal article" date="2009" name="Appl. Environ. Microbiol.">
        <title>Genome analysis of the meat starter culture bacterium Staphylococcus carnosus TM300.</title>
        <authorList>
            <person name="Rosenstein R."/>
            <person name="Nerz C."/>
            <person name="Biswas L."/>
            <person name="Resch A."/>
            <person name="Raddatz G."/>
            <person name="Schuster S.C."/>
            <person name="Goetz F."/>
        </authorList>
    </citation>
    <scope>NUCLEOTIDE SEQUENCE [LARGE SCALE GENOMIC DNA]</scope>
    <source>
        <strain>TM300</strain>
    </source>
</reference>
<gene>
    <name evidence="1" type="primary">recA</name>
    <name type="ordered locus">Sca_0926</name>
</gene>
<evidence type="ECO:0000255" key="1">
    <source>
        <dbReference type="HAMAP-Rule" id="MF_00268"/>
    </source>
</evidence>
<evidence type="ECO:0000256" key="2">
    <source>
        <dbReference type="SAM" id="MobiDB-lite"/>
    </source>
</evidence>
<organism>
    <name type="scientific">Staphylococcus carnosus (strain TM300)</name>
    <dbReference type="NCBI Taxonomy" id="396513"/>
    <lineage>
        <taxon>Bacteria</taxon>
        <taxon>Bacillati</taxon>
        <taxon>Bacillota</taxon>
        <taxon>Bacilli</taxon>
        <taxon>Bacillales</taxon>
        <taxon>Staphylococcaceae</taxon>
        <taxon>Staphylococcus</taxon>
    </lineage>
</organism>
<dbReference type="EMBL" id="AM295250">
    <property type="protein sequence ID" value="CAL27834.1"/>
    <property type="molecule type" value="Genomic_DNA"/>
</dbReference>
<dbReference type="RefSeq" id="WP_015900175.1">
    <property type="nucleotide sequence ID" value="NC_012121.1"/>
</dbReference>
<dbReference type="SMR" id="B9DPC5"/>
<dbReference type="GeneID" id="93793354"/>
<dbReference type="KEGG" id="sca:SCA_0926"/>
<dbReference type="eggNOG" id="COG0468">
    <property type="taxonomic scope" value="Bacteria"/>
</dbReference>
<dbReference type="HOGENOM" id="CLU_040469_3_2_9"/>
<dbReference type="OrthoDB" id="9776733at2"/>
<dbReference type="BioCyc" id="SCAR396513:SCA_RS04660-MONOMER"/>
<dbReference type="Proteomes" id="UP000000444">
    <property type="component" value="Chromosome"/>
</dbReference>
<dbReference type="GO" id="GO:0005829">
    <property type="term" value="C:cytosol"/>
    <property type="evidence" value="ECO:0007669"/>
    <property type="project" value="TreeGrafter"/>
</dbReference>
<dbReference type="GO" id="GO:0005524">
    <property type="term" value="F:ATP binding"/>
    <property type="evidence" value="ECO:0007669"/>
    <property type="project" value="UniProtKB-UniRule"/>
</dbReference>
<dbReference type="GO" id="GO:0016887">
    <property type="term" value="F:ATP hydrolysis activity"/>
    <property type="evidence" value="ECO:0007669"/>
    <property type="project" value="InterPro"/>
</dbReference>
<dbReference type="GO" id="GO:0140664">
    <property type="term" value="F:ATP-dependent DNA damage sensor activity"/>
    <property type="evidence" value="ECO:0007669"/>
    <property type="project" value="InterPro"/>
</dbReference>
<dbReference type="GO" id="GO:0003684">
    <property type="term" value="F:damaged DNA binding"/>
    <property type="evidence" value="ECO:0007669"/>
    <property type="project" value="UniProtKB-UniRule"/>
</dbReference>
<dbReference type="GO" id="GO:0003697">
    <property type="term" value="F:single-stranded DNA binding"/>
    <property type="evidence" value="ECO:0007669"/>
    <property type="project" value="UniProtKB-UniRule"/>
</dbReference>
<dbReference type="GO" id="GO:0006310">
    <property type="term" value="P:DNA recombination"/>
    <property type="evidence" value="ECO:0007669"/>
    <property type="project" value="UniProtKB-UniRule"/>
</dbReference>
<dbReference type="GO" id="GO:0006281">
    <property type="term" value="P:DNA repair"/>
    <property type="evidence" value="ECO:0007669"/>
    <property type="project" value="UniProtKB-UniRule"/>
</dbReference>
<dbReference type="GO" id="GO:0009432">
    <property type="term" value="P:SOS response"/>
    <property type="evidence" value="ECO:0007669"/>
    <property type="project" value="UniProtKB-UniRule"/>
</dbReference>
<dbReference type="CDD" id="cd00983">
    <property type="entry name" value="RecA"/>
    <property type="match status" value="1"/>
</dbReference>
<dbReference type="FunFam" id="3.40.50.300:FF:000087">
    <property type="entry name" value="Recombinase RecA"/>
    <property type="match status" value="1"/>
</dbReference>
<dbReference type="Gene3D" id="3.40.50.300">
    <property type="entry name" value="P-loop containing nucleotide triphosphate hydrolases"/>
    <property type="match status" value="1"/>
</dbReference>
<dbReference type="HAMAP" id="MF_00268">
    <property type="entry name" value="RecA"/>
    <property type="match status" value="1"/>
</dbReference>
<dbReference type="InterPro" id="IPR003593">
    <property type="entry name" value="AAA+_ATPase"/>
</dbReference>
<dbReference type="InterPro" id="IPR013765">
    <property type="entry name" value="DNA_recomb/repair_RecA"/>
</dbReference>
<dbReference type="InterPro" id="IPR020584">
    <property type="entry name" value="DNA_recomb/repair_RecA_CS"/>
</dbReference>
<dbReference type="InterPro" id="IPR027417">
    <property type="entry name" value="P-loop_NTPase"/>
</dbReference>
<dbReference type="InterPro" id="IPR049261">
    <property type="entry name" value="RecA-like_C"/>
</dbReference>
<dbReference type="InterPro" id="IPR049428">
    <property type="entry name" value="RecA-like_N"/>
</dbReference>
<dbReference type="InterPro" id="IPR020588">
    <property type="entry name" value="RecA_ATP-bd"/>
</dbReference>
<dbReference type="InterPro" id="IPR023400">
    <property type="entry name" value="RecA_C_sf"/>
</dbReference>
<dbReference type="InterPro" id="IPR020587">
    <property type="entry name" value="RecA_monomer-monomer_interface"/>
</dbReference>
<dbReference type="NCBIfam" id="TIGR02012">
    <property type="entry name" value="tigrfam_recA"/>
    <property type="match status" value="1"/>
</dbReference>
<dbReference type="PANTHER" id="PTHR45900:SF1">
    <property type="entry name" value="MITOCHONDRIAL DNA REPAIR PROTEIN RECA HOMOLOG-RELATED"/>
    <property type="match status" value="1"/>
</dbReference>
<dbReference type="PANTHER" id="PTHR45900">
    <property type="entry name" value="RECA"/>
    <property type="match status" value="1"/>
</dbReference>
<dbReference type="Pfam" id="PF00154">
    <property type="entry name" value="RecA"/>
    <property type="match status" value="1"/>
</dbReference>
<dbReference type="Pfam" id="PF21096">
    <property type="entry name" value="RecA_C"/>
    <property type="match status" value="1"/>
</dbReference>
<dbReference type="PRINTS" id="PR00142">
    <property type="entry name" value="RECA"/>
</dbReference>
<dbReference type="SMART" id="SM00382">
    <property type="entry name" value="AAA"/>
    <property type="match status" value="1"/>
</dbReference>
<dbReference type="SUPFAM" id="SSF52540">
    <property type="entry name" value="P-loop containing nucleoside triphosphate hydrolases"/>
    <property type="match status" value="1"/>
</dbReference>
<dbReference type="SUPFAM" id="SSF54752">
    <property type="entry name" value="RecA protein, C-terminal domain"/>
    <property type="match status" value="1"/>
</dbReference>
<dbReference type="PROSITE" id="PS00321">
    <property type="entry name" value="RECA_1"/>
    <property type="match status" value="1"/>
</dbReference>
<dbReference type="PROSITE" id="PS50162">
    <property type="entry name" value="RECA_2"/>
    <property type="match status" value="1"/>
</dbReference>
<dbReference type="PROSITE" id="PS50163">
    <property type="entry name" value="RECA_3"/>
    <property type="match status" value="1"/>
</dbReference>
<keyword id="KW-0067">ATP-binding</keyword>
<keyword id="KW-0963">Cytoplasm</keyword>
<keyword id="KW-0227">DNA damage</keyword>
<keyword id="KW-0233">DNA recombination</keyword>
<keyword id="KW-0234">DNA repair</keyword>
<keyword id="KW-0238">DNA-binding</keyword>
<keyword id="KW-0547">Nucleotide-binding</keyword>
<keyword id="KW-1185">Reference proteome</keyword>
<keyword id="KW-0742">SOS response</keyword>
<protein>
    <recommendedName>
        <fullName evidence="1">Protein RecA</fullName>
    </recommendedName>
    <alternativeName>
        <fullName evidence="1">Recombinase A</fullName>
    </alternativeName>
</protein>
<accession>B9DPC5</accession>
<comment type="function">
    <text evidence="1">Can catalyze the hydrolysis of ATP in the presence of single-stranded DNA, the ATP-dependent uptake of single-stranded DNA by duplex DNA, and the ATP-dependent hybridization of homologous single-stranded DNAs. It interacts with LexA causing its activation and leading to its autocatalytic cleavage.</text>
</comment>
<comment type="subcellular location">
    <subcellularLocation>
        <location evidence="1">Cytoplasm</location>
    </subcellularLocation>
</comment>
<comment type="similarity">
    <text evidence="1">Belongs to the RecA family.</text>
</comment>
<proteinExistence type="inferred from homology"/>
<name>RECA_STACT</name>